<reference key="1">
    <citation type="journal article" date="1999" name="FEBS Lett.">
        <title>DelGEF, an RCC1-related protein encoded by a gene on chromosome 11p14 critical for two forms of hereditary deafness.</title>
        <authorList>
            <person name="Uhlmann J."/>
            <person name="Wiemann S."/>
            <person name="Ponstingl H."/>
        </authorList>
    </citation>
    <scope>NUCLEOTIDE SEQUENCE [MRNA]</scope>
</reference>
<reference key="2">
    <citation type="journal article" date="2005" name="Science">
        <title>The transcriptional landscape of the mammalian genome.</title>
        <authorList>
            <person name="Carninci P."/>
            <person name="Kasukawa T."/>
            <person name="Katayama S."/>
            <person name="Gough J."/>
            <person name="Frith M.C."/>
            <person name="Maeda N."/>
            <person name="Oyama R."/>
            <person name="Ravasi T."/>
            <person name="Lenhard B."/>
            <person name="Wells C."/>
            <person name="Kodzius R."/>
            <person name="Shimokawa K."/>
            <person name="Bajic V.B."/>
            <person name="Brenner S.E."/>
            <person name="Batalov S."/>
            <person name="Forrest A.R."/>
            <person name="Zavolan M."/>
            <person name="Davis M.J."/>
            <person name="Wilming L.G."/>
            <person name="Aidinis V."/>
            <person name="Allen J.E."/>
            <person name="Ambesi-Impiombato A."/>
            <person name="Apweiler R."/>
            <person name="Aturaliya R.N."/>
            <person name="Bailey T.L."/>
            <person name="Bansal M."/>
            <person name="Baxter L."/>
            <person name="Beisel K.W."/>
            <person name="Bersano T."/>
            <person name="Bono H."/>
            <person name="Chalk A.M."/>
            <person name="Chiu K.P."/>
            <person name="Choudhary V."/>
            <person name="Christoffels A."/>
            <person name="Clutterbuck D.R."/>
            <person name="Crowe M.L."/>
            <person name="Dalla E."/>
            <person name="Dalrymple B.P."/>
            <person name="de Bono B."/>
            <person name="Della Gatta G."/>
            <person name="di Bernardo D."/>
            <person name="Down T."/>
            <person name="Engstrom P."/>
            <person name="Fagiolini M."/>
            <person name="Faulkner G."/>
            <person name="Fletcher C.F."/>
            <person name="Fukushima T."/>
            <person name="Furuno M."/>
            <person name="Futaki S."/>
            <person name="Gariboldi M."/>
            <person name="Georgii-Hemming P."/>
            <person name="Gingeras T.R."/>
            <person name="Gojobori T."/>
            <person name="Green R.E."/>
            <person name="Gustincich S."/>
            <person name="Harbers M."/>
            <person name="Hayashi Y."/>
            <person name="Hensch T.K."/>
            <person name="Hirokawa N."/>
            <person name="Hill D."/>
            <person name="Huminiecki L."/>
            <person name="Iacono M."/>
            <person name="Ikeo K."/>
            <person name="Iwama A."/>
            <person name="Ishikawa T."/>
            <person name="Jakt M."/>
            <person name="Kanapin A."/>
            <person name="Katoh M."/>
            <person name="Kawasawa Y."/>
            <person name="Kelso J."/>
            <person name="Kitamura H."/>
            <person name="Kitano H."/>
            <person name="Kollias G."/>
            <person name="Krishnan S.P."/>
            <person name="Kruger A."/>
            <person name="Kummerfeld S.K."/>
            <person name="Kurochkin I.V."/>
            <person name="Lareau L.F."/>
            <person name="Lazarevic D."/>
            <person name="Lipovich L."/>
            <person name="Liu J."/>
            <person name="Liuni S."/>
            <person name="McWilliam S."/>
            <person name="Madan Babu M."/>
            <person name="Madera M."/>
            <person name="Marchionni L."/>
            <person name="Matsuda H."/>
            <person name="Matsuzawa S."/>
            <person name="Miki H."/>
            <person name="Mignone F."/>
            <person name="Miyake S."/>
            <person name="Morris K."/>
            <person name="Mottagui-Tabar S."/>
            <person name="Mulder N."/>
            <person name="Nakano N."/>
            <person name="Nakauchi H."/>
            <person name="Ng P."/>
            <person name="Nilsson R."/>
            <person name="Nishiguchi S."/>
            <person name="Nishikawa S."/>
            <person name="Nori F."/>
            <person name="Ohara O."/>
            <person name="Okazaki Y."/>
            <person name="Orlando V."/>
            <person name="Pang K.C."/>
            <person name="Pavan W.J."/>
            <person name="Pavesi G."/>
            <person name="Pesole G."/>
            <person name="Petrovsky N."/>
            <person name="Piazza S."/>
            <person name="Reed J."/>
            <person name="Reid J.F."/>
            <person name="Ring B.Z."/>
            <person name="Ringwald M."/>
            <person name="Rost B."/>
            <person name="Ruan Y."/>
            <person name="Salzberg S.L."/>
            <person name="Sandelin A."/>
            <person name="Schneider C."/>
            <person name="Schoenbach C."/>
            <person name="Sekiguchi K."/>
            <person name="Semple C.A."/>
            <person name="Seno S."/>
            <person name="Sessa L."/>
            <person name="Sheng Y."/>
            <person name="Shibata Y."/>
            <person name="Shimada H."/>
            <person name="Shimada K."/>
            <person name="Silva D."/>
            <person name="Sinclair B."/>
            <person name="Sperling S."/>
            <person name="Stupka E."/>
            <person name="Sugiura K."/>
            <person name="Sultana R."/>
            <person name="Takenaka Y."/>
            <person name="Taki K."/>
            <person name="Tammoja K."/>
            <person name="Tan S.L."/>
            <person name="Tang S."/>
            <person name="Taylor M.S."/>
            <person name="Tegner J."/>
            <person name="Teichmann S.A."/>
            <person name="Ueda H.R."/>
            <person name="van Nimwegen E."/>
            <person name="Verardo R."/>
            <person name="Wei C.L."/>
            <person name="Yagi K."/>
            <person name="Yamanishi H."/>
            <person name="Zabarovsky E."/>
            <person name="Zhu S."/>
            <person name="Zimmer A."/>
            <person name="Hide W."/>
            <person name="Bult C."/>
            <person name="Grimmond S.M."/>
            <person name="Teasdale R.D."/>
            <person name="Liu E.T."/>
            <person name="Brusic V."/>
            <person name="Quackenbush J."/>
            <person name="Wahlestedt C."/>
            <person name="Mattick J.S."/>
            <person name="Hume D.A."/>
            <person name="Kai C."/>
            <person name="Sasaki D."/>
            <person name="Tomaru Y."/>
            <person name="Fukuda S."/>
            <person name="Kanamori-Katayama M."/>
            <person name="Suzuki M."/>
            <person name="Aoki J."/>
            <person name="Arakawa T."/>
            <person name="Iida J."/>
            <person name="Imamura K."/>
            <person name="Itoh M."/>
            <person name="Kato T."/>
            <person name="Kawaji H."/>
            <person name="Kawagashira N."/>
            <person name="Kawashima T."/>
            <person name="Kojima M."/>
            <person name="Kondo S."/>
            <person name="Konno H."/>
            <person name="Nakano K."/>
            <person name="Ninomiya N."/>
            <person name="Nishio T."/>
            <person name="Okada M."/>
            <person name="Plessy C."/>
            <person name="Shibata K."/>
            <person name="Shiraki T."/>
            <person name="Suzuki S."/>
            <person name="Tagami M."/>
            <person name="Waki K."/>
            <person name="Watahiki A."/>
            <person name="Okamura-Oho Y."/>
            <person name="Suzuki H."/>
            <person name="Kawai J."/>
            <person name="Hayashizaki Y."/>
        </authorList>
    </citation>
    <scope>NUCLEOTIDE SEQUENCE [LARGE SCALE MRNA]</scope>
    <source>
        <strain>C57BL/6J</strain>
        <tissue>Melanocyte</tissue>
        <tissue>Placenta</tissue>
    </source>
</reference>
<reference key="3">
    <citation type="journal article" date="2004" name="Genome Res.">
        <title>The status, quality, and expansion of the NIH full-length cDNA project: the Mammalian Gene Collection (MGC).</title>
        <authorList>
            <consortium name="The MGC Project Team"/>
        </authorList>
    </citation>
    <scope>NUCLEOTIDE SEQUENCE [LARGE SCALE MRNA]</scope>
    <source>
        <tissue>Brain</tissue>
    </source>
</reference>
<dbReference type="EMBL" id="AJ243952">
    <property type="protein sequence ID" value="CAB60840.1"/>
    <property type="molecule type" value="mRNA"/>
</dbReference>
<dbReference type="EMBL" id="AK145819">
    <property type="protein sequence ID" value="BAE26671.1"/>
    <property type="molecule type" value="mRNA"/>
</dbReference>
<dbReference type="EMBL" id="AK147848">
    <property type="protein sequence ID" value="BAE28179.1"/>
    <property type="molecule type" value="mRNA"/>
</dbReference>
<dbReference type="EMBL" id="BC049603">
    <property type="protein sequence ID" value="AAH49603.2"/>
    <property type="molecule type" value="mRNA"/>
</dbReference>
<dbReference type="EMBL" id="BC119533">
    <property type="protein sequence ID" value="AAI19534.1"/>
    <property type="molecule type" value="mRNA"/>
</dbReference>
<dbReference type="EMBL" id="BC119534">
    <property type="protein sequence ID" value="AAI19535.1"/>
    <property type="molecule type" value="mRNA"/>
</dbReference>
<dbReference type="CCDS" id="CCDS21279.1"/>
<dbReference type="RefSeq" id="NP_038817.1">
    <property type="nucleotide sequence ID" value="NM_013789.2"/>
</dbReference>
<dbReference type="SMR" id="Q80YD6"/>
<dbReference type="FunCoup" id="Q80YD6">
    <property type="interactions" value="1901"/>
</dbReference>
<dbReference type="STRING" id="10090.ENSMUSP00000033127"/>
<dbReference type="GlyGen" id="Q80YD6">
    <property type="glycosylation" value="1 site, 1 N-linked glycan (1 site)"/>
</dbReference>
<dbReference type="PhosphoSitePlus" id="Q80YD6"/>
<dbReference type="PaxDb" id="10090-ENSMUSP00000033127"/>
<dbReference type="ProteomicsDB" id="257399"/>
<dbReference type="Pumba" id="Q80YD6"/>
<dbReference type="Antibodypedia" id="12179">
    <property type="antibodies" value="97 antibodies from 22 providers"/>
</dbReference>
<dbReference type="DNASU" id="27414"/>
<dbReference type="Ensembl" id="ENSMUST00000033127.12">
    <property type="protein sequence ID" value="ENSMUSP00000033127.5"/>
    <property type="gene ID" value="ENSMUSG00000030839.13"/>
</dbReference>
<dbReference type="GeneID" id="27414"/>
<dbReference type="KEGG" id="mmu:27414"/>
<dbReference type="UCSC" id="uc009gyp.2">
    <property type="organism name" value="mouse"/>
</dbReference>
<dbReference type="AGR" id="MGI:1351630"/>
<dbReference type="CTD" id="26297"/>
<dbReference type="MGI" id="MGI:1351630">
    <property type="gene designation" value="Sergef"/>
</dbReference>
<dbReference type="VEuPathDB" id="HostDB:ENSMUSG00000030839"/>
<dbReference type="eggNOG" id="KOG1426">
    <property type="taxonomic scope" value="Eukaryota"/>
</dbReference>
<dbReference type="GeneTree" id="ENSGT00940000160684"/>
<dbReference type="HOGENOM" id="CLU_005210_0_3_1"/>
<dbReference type="InParanoid" id="Q80YD6"/>
<dbReference type="OMA" id="WRWGCSG"/>
<dbReference type="OrthoDB" id="10256179at2759"/>
<dbReference type="PhylomeDB" id="Q80YD6"/>
<dbReference type="TreeFam" id="TF330842"/>
<dbReference type="BioGRID-ORCS" id="27414">
    <property type="hits" value="3 hits in 77 CRISPR screens"/>
</dbReference>
<dbReference type="ChiTaRS" id="Sergef">
    <property type="organism name" value="mouse"/>
</dbReference>
<dbReference type="PRO" id="PR:Q80YD6"/>
<dbReference type="Proteomes" id="UP000000589">
    <property type="component" value="Chromosome 7"/>
</dbReference>
<dbReference type="RNAct" id="Q80YD6">
    <property type="molecule type" value="protein"/>
</dbReference>
<dbReference type="Bgee" id="ENSMUSG00000030839">
    <property type="expression patterns" value="Expressed in dentate gyrus of hippocampal formation granule cell and 209 other cell types or tissues"/>
</dbReference>
<dbReference type="ExpressionAtlas" id="Q80YD6">
    <property type="expression patterns" value="baseline and differential"/>
</dbReference>
<dbReference type="GO" id="GO:0005737">
    <property type="term" value="C:cytoplasm"/>
    <property type="evidence" value="ECO:0000250"/>
    <property type="project" value="UniProtKB"/>
</dbReference>
<dbReference type="GO" id="GO:0005829">
    <property type="term" value="C:cytosol"/>
    <property type="evidence" value="ECO:0007669"/>
    <property type="project" value="Ensembl"/>
</dbReference>
<dbReference type="GO" id="GO:0005654">
    <property type="term" value="C:nucleoplasm"/>
    <property type="evidence" value="ECO:0007669"/>
    <property type="project" value="Ensembl"/>
</dbReference>
<dbReference type="GO" id="GO:0005634">
    <property type="term" value="C:nucleus"/>
    <property type="evidence" value="ECO:0000250"/>
    <property type="project" value="UniProtKB"/>
</dbReference>
<dbReference type="GO" id="GO:0005085">
    <property type="term" value="F:guanyl-nucleotide exchange factor activity"/>
    <property type="evidence" value="ECO:0007669"/>
    <property type="project" value="UniProtKB-KW"/>
</dbReference>
<dbReference type="GO" id="GO:0050709">
    <property type="term" value="P:negative regulation of protein secretion"/>
    <property type="evidence" value="ECO:0007669"/>
    <property type="project" value="Ensembl"/>
</dbReference>
<dbReference type="FunFam" id="2.130.10.30:FF:000029">
    <property type="entry name" value="Secretion-regulating guanine nucleotide exchange factor"/>
    <property type="match status" value="1"/>
</dbReference>
<dbReference type="Gene3D" id="2.130.10.30">
    <property type="entry name" value="Regulator of chromosome condensation 1/beta-lactamase-inhibitor protein II"/>
    <property type="match status" value="2"/>
</dbReference>
<dbReference type="InterPro" id="IPR009091">
    <property type="entry name" value="RCC1/BLIP-II"/>
</dbReference>
<dbReference type="InterPro" id="IPR000408">
    <property type="entry name" value="Reg_chr_condens"/>
</dbReference>
<dbReference type="InterPro" id="IPR051210">
    <property type="entry name" value="Ub_ligase/GEF_domain"/>
</dbReference>
<dbReference type="PANTHER" id="PTHR22870:SF408">
    <property type="entry name" value="OS09G0560450 PROTEIN"/>
    <property type="match status" value="1"/>
</dbReference>
<dbReference type="PANTHER" id="PTHR22870">
    <property type="entry name" value="REGULATOR OF CHROMOSOME CONDENSATION"/>
    <property type="match status" value="1"/>
</dbReference>
<dbReference type="Pfam" id="PF25390">
    <property type="entry name" value="WD40_RLD"/>
    <property type="match status" value="1"/>
</dbReference>
<dbReference type="PRINTS" id="PR00633">
    <property type="entry name" value="RCCNDNSATION"/>
</dbReference>
<dbReference type="SUPFAM" id="SSF50985">
    <property type="entry name" value="RCC1/BLIP-II"/>
    <property type="match status" value="1"/>
</dbReference>
<dbReference type="PROSITE" id="PS00626">
    <property type="entry name" value="RCC1_2"/>
    <property type="match status" value="2"/>
</dbReference>
<dbReference type="PROSITE" id="PS50012">
    <property type="entry name" value="RCC1_3"/>
    <property type="match status" value="7"/>
</dbReference>
<name>SRGEF_MOUSE</name>
<protein>
    <recommendedName>
        <fullName>Secretion-regulating guanine nucleotide exchange factor</fullName>
    </recommendedName>
    <alternativeName>
        <fullName>Deafness locus-associated putative guanine nucleotide exchange factor</fullName>
        <shortName>DelGEF</shortName>
    </alternativeName>
    <alternativeName>
        <fullName>Guanine nucleotide exchange factor-related protein</fullName>
    </alternativeName>
</protein>
<keyword id="KW-0963">Cytoplasm</keyword>
<keyword id="KW-0344">Guanine-nucleotide releasing factor</keyword>
<keyword id="KW-0539">Nucleus</keyword>
<keyword id="KW-0597">Phosphoprotein</keyword>
<keyword id="KW-1185">Reference proteome</keyword>
<keyword id="KW-0677">Repeat</keyword>
<sequence>MARESCASETVSAAAVLFAWGANSYGQLGLGHKEDVFLPQQLSDFCQAGCIKSVTGGGGHSAVVTDGGDLFVCGLNKDGQLGLGHTEEVLRFTICKPLRGCPIRQVACGWDFTIMLTEKGQVLSCGSNAFGQLGVPHGPRKCVVPQAIECLREKVVCVAAGLRHALATTATGSVFQWGTGLASSGRRLCPGQNLPLFLTAKEPSRVTGLENSTAVCAVAGSDHSASLTDTGELYVWGRNKHGQLASRAVFLPLPQRIEAHYFQDEKVTAVWSGWTHLVAKTETGKVFTWGRADYGQLGRRLEPPEAQKPVEQDSSLAFQGPQNSVPSPLHCLTGATEISCGSEHNLAVIRDKCCSWGWNEHGMCGDGTESNVWTPTPVQALPPSPSRLLLVGCGAGHSLAVCQLPAHPVPCQDLKVTCPLPDDTENTESQGAVDRDRLEGETISDLNPDRTRNGGGGCESETVQ</sequence>
<proteinExistence type="evidence at transcript level"/>
<feature type="chain" id="PRO_0000206650" description="Secretion-regulating guanine nucleotide exchange factor">
    <location>
        <begin position="1"/>
        <end position="464"/>
    </location>
</feature>
<feature type="repeat" description="RCC1 1">
    <location>
        <begin position="15"/>
        <end position="67"/>
    </location>
</feature>
<feature type="repeat" description="RCC1 2">
    <location>
        <begin position="68"/>
        <end position="119"/>
    </location>
</feature>
<feature type="repeat" description="RCC1 3">
    <location>
        <begin position="120"/>
        <end position="171"/>
    </location>
</feature>
<feature type="repeat" description="RCC1 4">
    <location>
        <begin position="172"/>
        <end position="230"/>
    </location>
</feature>
<feature type="repeat" description="RCC1 5">
    <location>
        <begin position="231"/>
        <end position="283"/>
    </location>
</feature>
<feature type="repeat" description="RCC1 6">
    <location>
        <begin position="284"/>
        <end position="351"/>
    </location>
</feature>
<feature type="repeat" description="RCC1 7">
    <location>
        <begin position="352"/>
        <end position="402"/>
    </location>
</feature>
<feature type="region of interest" description="Disordered" evidence="3">
    <location>
        <begin position="422"/>
        <end position="464"/>
    </location>
</feature>
<feature type="modified residue" description="Phosphoserine" evidence="2">
    <location>
        <position position="429"/>
    </location>
</feature>
<feature type="sequence conflict" description="In Ref. 2; BAE26671." evidence="4" ref="2">
    <original>P</original>
    <variation>Q</variation>
    <location>
        <position position="448"/>
    </location>
</feature>
<accession>Q80YD6</accession>
<accession>Q0VDT0</accession>
<accession>Q3UGM8</accession>
<accession>Q3UKY0</accession>
<accession>Q9QXB7</accession>
<evidence type="ECO:0000250" key="1"/>
<evidence type="ECO:0000250" key="2">
    <source>
        <dbReference type="UniProtKB" id="Q9UGK8"/>
    </source>
</evidence>
<evidence type="ECO:0000256" key="3">
    <source>
        <dbReference type="SAM" id="MobiDB-lite"/>
    </source>
</evidence>
<evidence type="ECO:0000305" key="4"/>
<gene>
    <name type="primary">Sergef</name>
    <name type="synonym">Delgef</name>
    <name type="synonym">Gnefr</name>
</gene>
<organism>
    <name type="scientific">Mus musculus</name>
    <name type="common">Mouse</name>
    <dbReference type="NCBI Taxonomy" id="10090"/>
    <lineage>
        <taxon>Eukaryota</taxon>
        <taxon>Metazoa</taxon>
        <taxon>Chordata</taxon>
        <taxon>Craniata</taxon>
        <taxon>Vertebrata</taxon>
        <taxon>Euteleostomi</taxon>
        <taxon>Mammalia</taxon>
        <taxon>Eutheria</taxon>
        <taxon>Euarchontoglires</taxon>
        <taxon>Glires</taxon>
        <taxon>Rodentia</taxon>
        <taxon>Myomorpha</taxon>
        <taxon>Muroidea</taxon>
        <taxon>Muridae</taxon>
        <taxon>Murinae</taxon>
        <taxon>Mus</taxon>
        <taxon>Mus</taxon>
    </lineage>
</organism>
<comment type="function">
    <text>Probable guanine nucleotide exchange factor (GEF), which may be involved in the secretion process.</text>
</comment>
<comment type="subunit">
    <text evidence="1">Interacts with SEC5. The interaction occurs only in the presence of magnesium or manganese and is stimulated by dCTP or GTP (By similarity).</text>
</comment>
<comment type="subcellular location">
    <subcellularLocation>
        <location evidence="1">Cytoplasm</location>
    </subcellularLocation>
    <subcellularLocation>
        <location evidence="1">Nucleus</location>
    </subcellularLocation>
</comment>